<evidence type="ECO:0000256" key="1">
    <source>
        <dbReference type="SAM" id="MobiDB-lite"/>
    </source>
</evidence>
<reference key="1">
    <citation type="journal article" date="1998" name="Science">
        <title>Complete genome sequence of Treponema pallidum, the syphilis spirochete.</title>
        <authorList>
            <person name="Fraser C.M."/>
            <person name="Norris S.J."/>
            <person name="Weinstock G.M."/>
            <person name="White O."/>
            <person name="Sutton G.G."/>
            <person name="Dodson R.J."/>
            <person name="Gwinn M.L."/>
            <person name="Hickey E.K."/>
            <person name="Clayton R.A."/>
            <person name="Ketchum K.A."/>
            <person name="Sodergren E."/>
            <person name="Hardham J.M."/>
            <person name="McLeod M.P."/>
            <person name="Salzberg S.L."/>
            <person name="Peterson J.D."/>
            <person name="Khalak H.G."/>
            <person name="Richardson D.L."/>
            <person name="Howell J.K."/>
            <person name="Chidambaram M."/>
            <person name="Utterback T.R."/>
            <person name="McDonald L.A."/>
            <person name="Artiach P."/>
            <person name="Bowman C."/>
            <person name="Cotton M.D."/>
            <person name="Fujii C."/>
            <person name="Garland S.A."/>
            <person name="Hatch B."/>
            <person name="Horst K."/>
            <person name="Roberts K.M."/>
            <person name="Sandusky M."/>
            <person name="Weidman J.F."/>
            <person name="Smith H.O."/>
            <person name="Venter J.C."/>
        </authorList>
    </citation>
    <scope>NUCLEOTIDE SEQUENCE [LARGE SCALE GENOMIC DNA]</scope>
    <source>
        <strain>Nichols</strain>
    </source>
</reference>
<feature type="chain" id="PRO_0000202284" description="Uncharacterized protein TP_0598">
    <location>
        <begin position="1"/>
        <end position="605"/>
    </location>
</feature>
<feature type="region of interest" description="Disordered" evidence="1">
    <location>
        <begin position="22"/>
        <end position="93"/>
    </location>
</feature>
<feature type="compositionally biased region" description="Low complexity" evidence="1">
    <location>
        <begin position="46"/>
        <end position="57"/>
    </location>
</feature>
<name>Y598_TREPA</name>
<protein>
    <recommendedName>
        <fullName>Uncharacterized protein TP_0598</fullName>
    </recommendedName>
</protein>
<organism>
    <name type="scientific">Treponema pallidum (strain Nichols)</name>
    <dbReference type="NCBI Taxonomy" id="243276"/>
    <lineage>
        <taxon>Bacteria</taxon>
        <taxon>Pseudomonadati</taxon>
        <taxon>Spirochaetota</taxon>
        <taxon>Spirochaetia</taxon>
        <taxon>Spirochaetales</taxon>
        <taxon>Treponemataceae</taxon>
        <taxon>Treponema</taxon>
    </lineage>
</organism>
<keyword id="KW-1185">Reference proteome</keyword>
<sequence length="605" mass="66846">MGCCTLGLFADSVEKRAAKDVFTEPARFYPSQKSTLESARSDTSESENASSSVPSHSQQELAPDSAAPARNSVLSPAPPERREKQGTAVHGAEVTRAGAVSPRFVGGLTKILAASDHTFFAAGNDGFLTQYTYPDYKPDTWQITPVSIKHCAVHPDRARIAVYETDGRNYHRVSVWNWRTKEILFAKRFTASVVSLSWIVQGSFLSVGTASREGVTVLDGSGNTVSLFSEEPGVVLLTASGPRLVLSYAESGRLTYVDYSKKTTVKRLLTEKNLLSPMLIHNGAHLVGYRDQRVYVIQSSSGAVLTEYPARSACFAHTFSDSLPVWIEPAELKYHWRIRKAAQRSADFMLPDNARITSACSVRTRVIVGTDRGILYELQQGDDRRVTIRALNGERQIYASDVHGADEGAYFLADGSLYHSMASGGPYRVLVRGVKGTRFLPYRDGFIVWSAGKETEFLHCAQKTSQHRMIYRARSTVSGVSVYGRMLVITEPFSGVSVVDIERGIRVFFHKAIGMQDSLLITDDVIVATQSGLQPLVLLHMRTGETYTQRWEAICLGVRAHDTQHVYFFSLDTNAGTTDLIHFVCNCSNPQKVLCDASSLIRMRI</sequence>
<proteinExistence type="predicted"/>
<dbReference type="EMBL" id="AE000520">
    <property type="protein sequence ID" value="AAC65581.1"/>
    <property type="molecule type" value="Genomic_DNA"/>
</dbReference>
<dbReference type="PIR" id="H71303">
    <property type="entry name" value="H71303"/>
</dbReference>
<dbReference type="RefSeq" id="WP_010882044.1">
    <property type="nucleotide sequence ID" value="NC_000919.1"/>
</dbReference>
<dbReference type="IntAct" id="O83607">
    <property type="interactions" value="4"/>
</dbReference>
<dbReference type="STRING" id="243276.TP_0598"/>
<dbReference type="EnsemblBacteria" id="AAC65581">
    <property type="protein sequence ID" value="AAC65581"/>
    <property type="gene ID" value="TP_0598"/>
</dbReference>
<dbReference type="KEGG" id="tpa:TP_0598"/>
<dbReference type="PATRIC" id="fig|243276.5.peg.637"/>
<dbReference type="eggNOG" id="ENOG5034689">
    <property type="taxonomic scope" value="Bacteria"/>
</dbReference>
<dbReference type="HOGENOM" id="CLU_019092_1_0_12"/>
<dbReference type="Proteomes" id="UP000000811">
    <property type="component" value="Chromosome"/>
</dbReference>
<dbReference type="Gene3D" id="2.130.10.10">
    <property type="entry name" value="YVTN repeat-like/Quinoprotein amine dehydrogenase"/>
    <property type="match status" value="1"/>
</dbReference>
<dbReference type="InterPro" id="IPR011048">
    <property type="entry name" value="Haem_d1_sf"/>
</dbReference>
<dbReference type="InterPro" id="IPR015943">
    <property type="entry name" value="WD40/YVTN_repeat-like_dom_sf"/>
</dbReference>
<dbReference type="SUPFAM" id="SSF51004">
    <property type="entry name" value="C-terminal (heme d1) domain of cytochrome cd1-nitrite reductase"/>
    <property type="match status" value="1"/>
</dbReference>
<dbReference type="SUPFAM" id="SSF69304">
    <property type="entry name" value="Tricorn protease N-terminal domain"/>
    <property type="match status" value="1"/>
</dbReference>
<accession>O83607</accession>
<gene>
    <name type="ordered locus">TP_0598</name>
</gene>